<protein>
    <recommendedName>
        <fullName evidence="1">HMP-PP phosphatase</fullName>
        <ecNumber evidence="1">3.6.1.-</ecNumber>
    </recommendedName>
</protein>
<evidence type="ECO:0000255" key="1">
    <source>
        <dbReference type="HAMAP-Rule" id="MF_01847"/>
    </source>
</evidence>
<gene>
    <name evidence="1" type="primary">cof</name>
    <name type="ordered locus">SSPA2107</name>
</gene>
<comment type="function">
    <text evidence="1">Catalyzes the hydrolysis of 4-amino-2-methyl-5-hydroxymethylpyrimidine pyrophosphate (HMP-PP) to 4-amino-2-methyl-5-hydroxymethylpyrimidine phosphate (HMP-P).</text>
</comment>
<comment type="catalytic activity">
    <reaction evidence="1">
        <text>4-amino-2-methyl-5-(diphosphooxymethyl)pyrimidine + H2O = 4-amino-2-methyl-5-(phosphooxymethyl)pyrimidine + phosphate + H(+)</text>
        <dbReference type="Rhea" id="RHEA:27914"/>
        <dbReference type="ChEBI" id="CHEBI:15377"/>
        <dbReference type="ChEBI" id="CHEBI:15378"/>
        <dbReference type="ChEBI" id="CHEBI:43474"/>
        <dbReference type="ChEBI" id="CHEBI:57841"/>
        <dbReference type="ChEBI" id="CHEBI:58354"/>
    </reaction>
</comment>
<comment type="cofactor">
    <cofactor evidence="1">
        <name>Mg(2+)</name>
        <dbReference type="ChEBI" id="CHEBI:18420"/>
    </cofactor>
</comment>
<comment type="similarity">
    <text evidence="1">Belongs to the HAD-like hydrolase superfamily. Cof family.</text>
</comment>
<dbReference type="EC" id="3.6.1.-" evidence="1"/>
<dbReference type="EMBL" id="FM200053">
    <property type="protein sequence ID" value="CAR60317.1"/>
    <property type="molecule type" value="Genomic_DNA"/>
</dbReference>
<dbReference type="RefSeq" id="WP_000113030.1">
    <property type="nucleotide sequence ID" value="NC_011147.1"/>
</dbReference>
<dbReference type="SMR" id="B5BD74"/>
<dbReference type="KEGG" id="sek:SSPA2107"/>
<dbReference type="HOGENOM" id="CLU_044146_5_2_6"/>
<dbReference type="Proteomes" id="UP000001869">
    <property type="component" value="Chromosome"/>
</dbReference>
<dbReference type="GO" id="GO:0002145">
    <property type="term" value="F:4-amino-5-hydroxymethyl-2-methylpyrimidine diphosphatase activity"/>
    <property type="evidence" value="ECO:0007669"/>
    <property type="project" value="RHEA"/>
</dbReference>
<dbReference type="GO" id="GO:0000287">
    <property type="term" value="F:magnesium ion binding"/>
    <property type="evidence" value="ECO:0000250"/>
    <property type="project" value="UniProtKB"/>
</dbReference>
<dbReference type="GO" id="GO:0016791">
    <property type="term" value="F:phosphatase activity"/>
    <property type="evidence" value="ECO:0000250"/>
    <property type="project" value="UniProtKB"/>
</dbReference>
<dbReference type="CDD" id="cd07516">
    <property type="entry name" value="HAD_Pase"/>
    <property type="match status" value="1"/>
</dbReference>
<dbReference type="FunFam" id="3.30.1240.10:FF:000002">
    <property type="entry name" value="HMP-PP phosphatase"/>
    <property type="match status" value="1"/>
</dbReference>
<dbReference type="Gene3D" id="3.30.1240.10">
    <property type="match status" value="1"/>
</dbReference>
<dbReference type="Gene3D" id="3.40.50.1000">
    <property type="entry name" value="HAD superfamily/HAD-like"/>
    <property type="match status" value="1"/>
</dbReference>
<dbReference type="HAMAP" id="MF_01847">
    <property type="entry name" value="HMP_PP_phosphat"/>
    <property type="match status" value="1"/>
</dbReference>
<dbReference type="InterPro" id="IPR000150">
    <property type="entry name" value="Cof"/>
</dbReference>
<dbReference type="InterPro" id="IPR036412">
    <property type="entry name" value="HAD-like_sf"/>
</dbReference>
<dbReference type="InterPro" id="IPR006379">
    <property type="entry name" value="HAD-SF_hydro_IIB"/>
</dbReference>
<dbReference type="InterPro" id="IPR023214">
    <property type="entry name" value="HAD_sf"/>
</dbReference>
<dbReference type="InterPro" id="IPR023938">
    <property type="entry name" value="HMP-PP_phosphatase"/>
</dbReference>
<dbReference type="NCBIfam" id="TIGR00099">
    <property type="entry name" value="Cof-subfamily"/>
    <property type="match status" value="1"/>
</dbReference>
<dbReference type="NCBIfam" id="TIGR01484">
    <property type="entry name" value="HAD-SF-IIB"/>
    <property type="match status" value="1"/>
</dbReference>
<dbReference type="NCBIfam" id="NF011705">
    <property type="entry name" value="PRK15126.1"/>
    <property type="match status" value="1"/>
</dbReference>
<dbReference type="PANTHER" id="PTHR47267">
    <property type="match status" value="1"/>
</dbReference>
<dbReference type="PANTHER" id="PTHR47267:SF2">
    <property type="entry name" value="HMP-PP PHOSPHATASE"/>
    <property type="match status" value="1"/>
</dbReference>
<dbReference type="Pfam" id="PF08282">
    <property type="entry name" value="Hydrolase_3"/>
    <property type="match status" value="1"/>
</dbReference>
<dbReference type="SFLD" id="SFLDG01140">
    <property type="entry name" value="C2.B:_Phosphomannomutase_and_P"/>
    <property type="match status" value="1"/>
</dbReference>
<dbReference type="SFLD" id="SFLDS00003">
    <property type="entry name" value="Haloacid_Dehalogenase"/>
    <property type="match status" value="1"/>
</dbReference>
<dbReference type="SUPFAM" id="SSF56784">
    <property type="entry name" value="HAD-like"/>
    <property type="match status" value="1"/>
</dbReference>
<dbReference type="PROSITE" id="PS01228">
    <property type="entry name" value="COF_1"/>
    <property type="match status" value="1"/>
</dbReference>
<dbReference type="PROSITE" id="PS01229">
    <property type="entry name" value="COF_2"/>
    <property type="match status" value="1"/>
</dbReference>
<keyword id="KW-0378">Hydrolase</keyword>
<keyword id="KW-0460">Magnesium</keyword>
<keyword id="KW-0479">Metal-binding</keyword>
<organism>
    <name type="scientific">Salmonella paratyphi A (strain AKU_12601)</name>
    <dbReference type="NCBI Taxonomy" id="554290"/>
    <lineage>
        <taxon>Bacteria</taxon>
        <taxon>Pseudomonadati</taxon>
        <taxon>Pseudomonadota</taxon>
        <taxon>Gammaproteobacteria</taxon>
        <taxon>Enterobacterales</taxon>
        <taxon>Enterobacteriaceae</taxon>
        <taxon>Salmonella</taxon>
    </lineage>
</organism>
<reference key="1">
    <citation type="journal article" date="2009" name="BMC Genomics">
        <title>Pseudogene accumulation in the evolutionary histories of Salmonella enterica serovars Paratyphi A and Typhi.</title>
        <authorList>
            <person name="Holt K.E."/>
            <person name="Thomson N.R."/>
            <person name="Wain J."/>
            <person name="Langridge G.C."/>
            <person name="Hasan R."/>
            <person name="Bhutta Z.A."/>
            <person name="Quail M.A."/>
            <person name="Norbertczak H."/>
            <person name="Walker D."/>
            <person name="Simmonds M."/>
            <person name="White B."/>
            <person name="Bason N."/>
            <person name="Mungall K."/>
            <person name="Dougan G."/>
            <person name="Parkhill J."/>
        </authorList>
    </citation>
    <scope>NUCLEOTIDE SEQUENCE [LARGE SCALE GENOMIC DNA]</scope>
    <source>
        <strain>AKU_12601</strain>
    </source>
</reference>
<sequence length="272" mass="30104">MARLAAFDMDGTLLMPDHHLGRETIATLARLRERDITLTFATGRHVLEMRHILGTLSLDAYLITGNGTRIHSLEGDVLHRQDLDPQVADTVMHHAWDTRASMHVFNDNGWFTGQEIPALLQAHVYSGFRYQVIDIKSIPAHQVTKICFCGDHDDLIRLRIQLNEALEERAHLCFSAVDCLEVLPLGCNKGSALAVLSNHLGLSLADCMAFGDAMNDREMLGSVGRGLIMGNAMPQLIAALPHLSVIGHCGNQAVSHFLTHWLDNPHLPYSPE</sequence>
<proteinExistence type="inferred from homology"/>
<feature type="chain" id="PRO_1000188512" description="HMP-PP phosphatase">
    <location>
        <begin position="1"/>
        <end position="272"/>
    </location>
</feature>
<feature type="active site" description="Nucleophile" evidence="1">
    <location>
        <position position="8"/>
    </location>
</feature>
<feature type="binding site" evidence="1">
    <location>
        <position position="8"/>
    </location>
    <ligand>
        <name>Mg(2+)</name>
        <dbReference type="ChEBI" id="CHEBI:18420"/>
    </ligand>
</feature>
<feature type="binding site" evidence="1">
    <location>
        <position position="10"/>
    </location>
    <ligand>
        <name>Mg(2+)</name>
        <dbReference type="ChEBI" id="CHEBI:18420"/>
    </ligand>
</feature>
<feature type="binding site" evidence="1">
    <location>
        <position position="212"/>
    </location>
    <ligand>
        <name>Mg(2+)</name>
        <dbReference type="ChEBI" id="CHEBI:18420"/>
    </ligand>
</feature>
<name>COF_SALPK</name>
<accession>B5BD74</accession>